<comment type="function">
    <text evidence="1">Catalyzes the prenylation of para-hydroxybenzoate (PHB) with an all-trans polyprenyl group. Mediates the second step in the final reaction sequence of ubiquinone-8 (UQ-8) biosynthesis, which is the condensation of the polyisoprenoid side chain with PHB, generating the first membrane-bound Q intermediate 3-octaprenyl-4-hydroxybenzoate.</text>
</comment>
<comment type="catalytic activity">
    <reaction evidence="1">
        <text>all-trans-octaprenyl diphosphate + 4-hydroxybenzoate = 4-hydroxy-3-(all-trans-octaprenyl)benzoate + diphosphate</text>
        <dbReference type="Rhea" id="RHEA:27782"/>
        <dbReference type="ChEBI" id="CHEBI:1617"/>
        <dbReference type="ChEBI" id="CHEBI:17879"/>
        <dbReference type="ChEBI" id="CHEBI:33019"/>
        <dbReference type="ChEBI" id="CHEBI:57711"/>
        <dbReference type="EC" id="2.5.1.39"/>
    </reaction>
</comment>
<comment type="cofactor">
    <cofactor evidence="1">
        <name>Mg(2+)</name>
        <dbReference type="ChEBI" id="CHEBI:18420"/>
    </cofactor>
</comment>
<comment type="pathway">
    <text evidence="1">Cofactor biosynthesis; ubiquinone biosynthesis.</text>
</comment>
<comment type="subcellular location">
    <subcellularLocation>
        <location evidence="1">Cell inner membrane</location>
        <topology evidence="1">Multi-pass membrane protein</topology>
    </subcellularLocation>
</comment>
<comment type="similarity">
    <text evidence="1">Belongs to the UbiA prenyltransferase family.</text>
</comment>
<keyword id="KW-0997">Cell inner membrane</keyword>
<keyword id="KW-1003">Cell membrane</keyword>
<keyword id="KW-0460">Magnesium</keyword>
<keyword id="KW-0472">Membrane</keyword>
<keyword id="KW-0808">Transferase</keyword>
<keyword id="KW-0812">Transmembrane</keyword>
<keyword id="KW-1133">Transmembrane helix</keyword>
<keyword id="KW-0831">Ubiquinone biosynthesis</keyword>
<dbReference type="EC" id="2.5.1.39" evidence="1"/>
<dbReference type="EMBL" id="CP000802">
    <property type="protein sequence ID" value="ABV08444.1"/>
    <property type="molecule type" value="Genomic_DNA"/>
</dbReference>
<dbReference type="RefSeq" id="WP_000455228.1">
    <property type="nucleotide sequence ID" value="NC_009800.1"/>
</dbReference>
<dbReference type="SMR" id="A8A7E0"/>
<dbReference type="GeneID" id="75204184"/>
<dbReference type="KEGG" id="ecx:EcHS_A4280"/>
<dbReference type="HOGENOM" id="CLU_034879_1_0_6"/>
<dbReference type="UniPathway" id="UPA00232"/>
<dbReference type="GO" id="GO:0005886">
    <property type="term" value="C:plasma membrane"/>
    <property type="evidence" value="ECO:0007669"/>
    <property type="project" value="UniProtKB-SubCell"/>
</dbReference>
<dbReference type="GO" id="GO:0008412">
    <property type="term" value="F:4-hydroxybenzoate polyprenyltransferase activity"/>
    <property type="evidence" value="ECO:0007669"/>
    <property type="project" value="UniProtKB-UniRule"/>
</dbReference>
<dbReference type="GO" id="GO:0006744">
    <property type="term" value="P:ubiquinone biosynthetic process"/>
    <property type="evidence" value="ECO:0007669"/>
    <property type="project" value="UniProtKB-UniRule"/>
</dbReference>
<dbReference type="CDD" id="cd13959">
    <property type="entry name" value="PT_UbiA_COQ2"/>
    <property type="match status" value="1"/>
</dbReference>
<dbReference type="FunFam" id="1.10.357.140:FF:000002">
    <property type="entry name" value="4-hydroxybenzoate octaprenyltransferase"/>
    <property type="match status" value="1"/>
</dbReference>
<dbReference type="FunFam" id="1.20.120.1780:FF:000001">
    <property type="entry name" value="4-hydroxybenzoate octaprenyltransferase"/>
    <property type="match status" value="1"/>
</dbReference>
<dbReference type="Gene3D" id="1.10.357.140">
    <property type="entry name" value="UbiA prenyltransferase"/>
    <property type="match status" value="1"/>
</dbReference>
<dbReference type="Gene3D" id="1.20.120.1780">
    <property type="entry name" value="UbiA prenyltransferase"/>
    <property type="match status" value="1"/>
</dbReference>
<dbReference type="HAMAP" id="MF_01635">
    <property type="entry name" value="UbiA"/>
    <property type="match status" value="1"/>
</dbReference>
<dbReference type="InterPro" id="IPR006370">
    <property type="entry name" value="HB_polyprenyltransferase-like"/>
</dbReference>
<dbReference type="InterPro" id="IPR039653">
    <property type="entry name" value="Prenyltransferase"/>
</dbReference>
<dbReference type="InterPro" id="IPR000537">
    <property type="entry name" value="UbiA_prenyltransferase"/>
</dbReference>
<dbReference type="InterPro" id="IPR030470">
    <property type="entry name" value="UbiA_prenylTrfase_CS"/>
</dbReference>
<dbReference type="InterPro" id="IPR044878">
    <property type="entry name" value="UbiA_sf"/>
</dbReference>
<dbReference type="NCBIfam" id="TIGR01474">
    <property type="entry name" value="ubiA_proteo"/>
    <property type="match status" value="1"/>
</dbReference>
<dbReference type="PANTHER" id="PTHR11048:SF28">
    <property type="entry name" value="4-HYDROXYBENZOATE POLYPRENYLTRANSFERASE, MITOCHONDRIAL"/>
    <property type="match status" value="1"/>
</dbReference>
<dbReference type="PANTHER" id="PTHR11048">
    <property type="entry name" value="PRENYLTRANSFERASES"/>
    <property type="match status" value="1"/>
</dbReference>
<dbReference type="Pfam" id="PF01040">
    <property type="entry name" value="UbiA"/>
    <property type="match status" value="1"/>
</dbReference>
<dbReference type="PROSITE" id="PS00943">
    <property type="entry name" value="UBIA"/>
    <property type="match status" value="1"/>
</dbReference>
<proteinExistence type="inferred from homology"/>
<feature type="chain" id="PRO_1000069816" description="4-hydroxybenzoate octaprenyltransferase">
    <location>
        <begin position="1"/>
        <end position="290"/>
    </location>
</feature>
<feature type="transmembrane region" description="Helical" evidence="1">
    <location>
        <begin position="23"/>
        <end position="43"/>
    </location>
</feature>
<feature type="transmembrane region" description="Helical" evidence="1">
    <location>
        <begin position="46"/>
        <end position="66"/>
    </location>
</feature>
<feature type="transmembrane region" description="Helical" evidence="1">
    <location>
        <begin position="99"/>
        <end position="119"/>
    </location>
</feature>
<feature type="transmembrane region" description="Helical" evidence="1">
    <location>
        <begin position="141"/>
        <end position="161"/>
    </location>
</feature>
<feature type="transmembrane region" description="Helical" evidence="1">
    <location>
        <begin position="163"/>
        <end position="183"/>
    </location>
</feature>
<feature type="transmembrane region" description="Helical" evidence="1">
    <location>
        <begin position="213"/>
        <end position="233"/>
    </location>
</feature>
<feature type="transmembrane region" description="Helical" evidence="1">
    <location>
        <begin position="234"/>
        <end position="254"/>
    </location>
</feature>
<feature type="transmembrane region" description="Helical" evidence="1">
    <location>
        <begin position="268"/>
        <end position="288"/>
    </location>
</feature>
<gene>
    <name evidence="1" type="primary">ubiA</name>
    <name type="ordered locus">EcHS_A4280</name>
</gene>
<accession>A8A7E0</accession>
<evidence type="ECO:0000255" key="1">
    <source>
        <dbReference type="HAMAP-Rule" id="MF_01635"/>
    </source>
</evidence>
<reference key="1">
    <citation type="journal article" date="2008" name="J. Bacteriol.">
        <title>The pangenome structure of Escherichia coli: comparative genomic analysis of E. coli commensal and pathogenic isolates.</title>
        <authorList>
            <person name="Rasko D.A."/>
            <person name="Rosovitz M.J."/>
            <person name="Myers G.S.A."/>
            <person name="Mongodin E.F."/>
            <person name="Fricke W.F."/>
            <person name="Gajer P."/>
            <person name="Crabtree J."/>
            <person name="Sebaihia M."/>
            <person name="Thomson N.R."/>
            <person name="Chaudhuri R."/>
            <person name="Henderson I.R."/>
            <person name="Sperandio V."/>
            <person name="Ravel J."/>
        </authorList>
    </citation>
    <scope>NUCLEOTIDE SEQUENCE [LARGE SCALE GENOMIC DNA]</scope>
    <source>
        <strain>HS</strain>
    </source>
</reference>
<organism>
    <name type="scientific">Escherichia coli O9:H4 (strain HS)</name>
    <dbReference type="NCBI Taxonomy" id="331112"/>
    <lineage>
        <taxon>Bacteria</taxon>
        <taxon>Pseudomonadati</taxon>
        <taxon>Pseudomonadota</taxon>
        <taxon>Gammaproteobacteria</taxon>
        <taxon>Enterobacterales</taxon>
        <taxon>Enterobacteriaceae</taxon>
        <taxon>Escherichia</taxon>
    </lineage>
</organism>
<name>UBIA_ECOHS</name>
<sequence length="290" mass="32498">MEWSLTQNKLLAFHRLMRTDKPIGALLLLWPTLWALWVATPGVPQLWILAVFVAGVWLMRAAGCVVNDYADRKFDGHVKRTANRPLPSGAVTEKEARALFVVLVLISFLLVLTLNTMTILLSIAALALAWVYPFMKRYTHLPQVVLGAAFGWSIPMAFAAVSESVPLSCWLMFLANILWAVAYDTQYAMVDRDDDVKIGIKSTAILFGQYDKLIIGILQIGVLALMAIIGELNGLGWGYYWSIVVAGALFVYQQKLIANREREACFKAFMNNNYVGLVLFLGLAMSYWHF</sequence>
<protein>
    <recommendedName>
        <fullName evidence="1">4-hydroxybenzoate octaprenyltransferase</fullName>
        <ecNumber evidence="1">2.5.1.39</ecNumber>
    </recommendedName>
    <alternativeName>
        <fullName evidence="1">4-HB polyprenyltransferase</fullName>
    </alternativeName>
</protein>